<evidence type="ECO:0000250" key="1"/>
<evidence type="ECO:0000250" key="2">
    <source>
        <dbReference type="UniProtKB" id="P08559"/>
    </source>
</evidence>
<evidence type="ECO:0000255" key="3"/>
<evidence type="ECO:0000312" key="4">
    <source>
        <dbReference type="WormBase" id="T05H10.6a"/>
    </source>
</evidence>
<sequence length="397" mass="43792">MSLFARQLQSLTASGIRTQQVRLASTEVSFHTKPCKLHKLDNGPNTSVTLNREDALKYYRDMQVIRRMESAAGNLYKEKKIRGFCHLYSGQEACAVGMKAAMTEGDAVITAYRCHGWTWLLGATVTEVLAELTGRVAGNVHGKGGSMHMYTKNFYGGNGIVGAQQPLGAGVALAMKYREQKNVCVTLYGDGAANQGQLFEATNMAKLWDLPVLFVCENNGFGMGTTAERSSASTEYYTRGDYVPGIWVDGMDILAVREATKWAKEYCDSGKGPLMMEMATYRYHGHSMSDPGTSYRTREEIQEVRKTRDPITGFKDRIITSSLATEEELKAIDKEVRKEVDEALKIATSDGVLPPEALYADIYHNTPAQEIRGATIDETIVQPFKTSADVLKSIGRA</sequence>
<feature type="transit peptide" description="Mitochondrion" evidence="3">
    <location>
        <begin position="1"/>
        <end status="unknown"/>
    </location>
</feature>
<feature type="chain" id="PRO_0000020439" description="Probable pyruvate dehydrogenase E1 component subunit alpha, mitochondrial">
    <location>
        <begin status="unknown"/>
        <end position="397"/>
    </location>
</feature>
<feature type="binding site" evidence="2">
    <location>
        <position position="86"/>
    </location>
    <ligand>
        <name>pyruvate</name>
        <dbReference type="ChEBI" id="CHEBI:15361"/>
    </ligand>
</feature>
<feature type="binding site" evidence="2">
    <location>
        <position position="112"/>
    </location>
    <ligand>
        <name>pyruvate</name>
        <dbReference type="ChEBI" id="CHEBI:15361"/>
    </ligand>
</feature>
<feature type="binding site" evidence="2">
    <location>
        <position position="112"/>
    </location>
    <ligand>
        <name>thiamine diphosphate</name>
        <dbReference type="ChEBI" id="CHEBI:58937"/>
        <note>ligand shared with beta subunit</note>
    </ligand>
</feature>
<feature type="binding site" evidence="2">
    <location>
        <position position="113"/>
    </location>
    <ligand>
        <name>pyruvate</name>
        <dbReference type="ChEBI" id="CHEBI:15361"/>
    </ligand>
</feature>
<feature type="binding site" evidence="2">
    <location>
        <position position="113"/>
    </location>
    <ligand>
        <name>thiamine diphosphate</name>
        <dbReference type="ChEBI" id="CHEBI:58937"/>
        <note>ligand shared with beta subunit</note>
    </ligand>
</feature>
<feature type="binding site" evidence="2">
    <location>
        <position position="159"/>
    </location>
    <ligand>
        <name>pyruvate</name>
        <dbReference type="ChEBI" id="CHEBI:15361"/>
    </ligand>
</feature>
<feature type="binding site" evidence="2">
    <location>
        <position position="159"/>
    </location>
    <ligand>
        <name>thiamine diphosphate</name>
        <dbReference type="ChEBI" id="CHEBI:58937"/>
        <note>ligand shared with beta subunit</note>
    </ligand>
</feature>
<feature type="binding site" evidence="2">
    <location>
        <position position="161"/>
    </location>
    <ligand>
        <name>pyruvate</name>
        <dbReference type="ChEBI" id="CHEBI:15361"/>
    </ligand>
</feature>
<feature type="binding site" evidence="2">
    <location>
        <position position="161"/>
    </location>
    <ligand>
        <name>thiamine diphosphate</name>
        <dbReference type="ChEBI" id="CHEBI:58937"/>
        <note>ligand shared with beta subunit</note>
    </ligand>
</feature>
<feature type="binding site" evidence="2">
    <location>
        <position position="190"/>
    </location>
    <ligand>
        <name>Mg(2+)</name>
        <dbReference type="ChEBI" id="CHEBI:18420"/>
    </ligand>
</feature>
<feature type="binding site" evidence="2">
    <location>
        <position position="190"/>
    </location>
    <ligand>
        <name>pyruvate</name>
        <dbReference type="ChEBI" id="CHEBI:15361"/>
    </ligand>
</feature>
<feature type="binding site" evidence="2">
    <location>
        <position position="190"/>
    </location>
    <ligand>
        <name>thiamine diphosphate</name>
        <dbReference type="ChEBI" id="CHEBI:58937"/>
        <note>ligand shared with beta subunit</note>
    </ligand>
</feature>
<feature type="binding site" evidence="2">
    <location>
        <position position="191"/>
    </location>
    <ligand>
        <name>pyruvate</name>
        <dbReference type="ChEBI" id="CHEBI:15361"/>
    </ligand>
</feature>
<feature type="binding site" evidence="2">
    <location>
        <position position="191"/>
    </location>
    <ligand>
        <name>thiamine diphosphate</name>
        <dbReference type="ChEBI" id="CHEBI:58937"/>
        <note>ligand shared with beta subunit</note>
    </ligand>
</feature>
<feature type="binding site" evidence="2">
    <location>
        <position position="192"/>
    </location>
    <ligand>
        <name>pyruvate</name>
        <dbReference type="ChEBI" id="CHEBI:15361"/>
    </ligand>
</feature>
<feature type="binding site" evidence="2">
    <location>
        <position position="192"/>
    </location>
    <ligand>
        <name>thiamine diphosphate</name>
        <dbReference type="ChEBI" id="CHEBI:58937"/>
        <note>ligand shared with beta subunit</note>
    </ligand>
</feature>
<feature type="binding site" evidence="2">
    <location>
        <position position="219"/>
    </location>
    <ligand>
        <name>Mg(2+)</name>
        <dbReference type="ChEBI" id="CHEBI:18420"/>
    </ligand>
</feature>
<feature type="binding site" evidence="2">
    <location>
        <position position="219"/>
    </location>
    <ligand>
        <name>pyruvate</name>
        <dbReference type="ChEBI" id="CHEBI:15361"/>
    </ligand>
</feature>
<feature type="binding site" evidence="2">
    <location>
        <position position="219"/>
    </location>
    <ligand>
        <name>thiamine diphosphate</name>
        <dbReference type="ChEBI" id="CHEBI:58937"/>
        <note>ligand shared with beta subunit</note>
    </ligand>
</feature>
<feature type="binding site" evidence="2">
    <location>
        <position position="286"/>
    </location>
    <ligand>
        <name>thiamine diphosphate</name>
        <dbReference type="ChEBI" id="CHEBI:58937"/>
        <note>ligand shared with beta subunit</note>
    </ligand>
</feature>
<organism>
    <name type="scientific">Caenorhabditis elegans</name>
    <dbReference type="NCBI Taxonomy" id="6239"/>
    <lineage>
        <taxon>Eukaryota</taxon>
        <taxon>Metazoa</taxon>
        <taxon>Ecdysozoa</taxon>
        <taxon>Nematoda</taxon>
        <taxon>Chromadorea</taxon>
        <taxon>Rhabditida</taxon>
        <taxon>Rhabditina</taxon>
        <taxon>Rhabditomorpha</taxon>
        <taxon>Rhabditoidea</taxon>
        <taxon>Rhabditidae</taxon>
        <taxon>Peloderinae</taxon>
        <taxon>Caenorhabditis</taxon>
    </lineage>
</organism>
<gene>
    <name evidence="4" type="primary">pdha-1</name>
    <name type="ORF">T05H10.6</name>
</gene>
<keyword id="KW-0460">Magnesium</keyword>
<keyword id="KW-0479">Metal-binding</keyword>
<keyword id="KW-0496">Mitochondrion</keyword>
<keyword id="KW-0560">Oxidoreductase</keyword>
<keyword id="KW-0597">Phosphoprotein</keyword>
<keyword id="KW-0670">Pyruvate</keyword>
<keyword id="KW-1185">Reference proteome</keyword>
<keyword id="KW-0786">Thiamine pyrophosphate</keyword>
<keyword id="KW-0809">Transit peptide</keyword>
<accession>P52899</accession>
<comment type="function">
    <text>The pyruvate dehydrogenase complex catalyzes the overall conversion of pyruvate to acetyl-CoA and CO(2). It contains multiple copies of three enzymatic components: pyruvate dehydrogenase (E1), dihydrolipoamide acetyltransferase (E2) and lipoamide dehydrogenase (E3).</text>
</comment>
<comment type="catalytic activity">
    <reaction>
        <text>N(6)-[(R)-lipoyl]-L-lysyl-[protein] + pyruvate + H(+) = N(6)-[(R)-S(8)-acetyldihydrolipoyl]-L-lysyl-[protein] + CO2</text>
        <dbReference type="Rhea" id="RHEA:19189"/>
        <dbReference type="Rhea" id="RHEA-COMP:10474"/>
        <dbReference type="Rhea" id="RHEA-COMP:10478"/>
        <dbReference type="ChEBI" id="CHEBI:15361"/>
        <dbReference type="ChEBI" id="CHEBI:15378"/>
        <dbReference type="ChEBI" id="CHEBI:16526"/>
        <dbReference type="ChEBI" id="CHEBI:83099"/>
        <dbReference type="ChEBI" id="CHEBI:83111"/>
        <dbReference type="EC" id="1.2.4.1"/>
    </reaction>
</comment>
<comment type="cofactor">
    <cofactor evidence="2">
        <name>thiamine diphosphate</name>
        <dbReference type="ChEBI" id="CHEBI:58937"/>
    </cofactor>
    <cofactor evidence="2">
        <name>Mg(2+)</name>
        <dbReference type="ChEBI" id="CHEBI:18420"/>
    </cofactor>
</comment>
<comment type="activity regulation">
    <text evidence="1">E1 activity is regulated by phosphorylation (inactivation) and dephosphorylation (activation) of the alpha subunit.</text>
</comment>
<comment type="subunit">
    <text evidence="1">Tetramer of 2 alpha and 2 beta subunits.</text>
</comment>
<comment type="subcellular location">
    <subcellularLocation>
        <location evidence="1">Mitochondrion matrix</location>
    </subcellularLocation>
</comment>
<name>ODPA_CAEEL</name>
<proteinExistence type="inferred from homology"/>
<reference key="1">
    <citation type="journal article" date="1998" name="Science">
        <title>Genome sequence of the nematode C. elegans: a platform for investigating biology.</title>
        <authorList>
            <consortium name="The C. elegans sequencing consortium"/>
        </authorList>
    </citation>
    <scope>NUCLEOTIDE SEQUENCE [LARGE SCALE GENOMIC DNA]</scope>
    <source>
        <strain>Bristol N2</strain>
    </source>
</reference>
<protein>
    <recommendedName>
        <fullName>Probable pyruvate dehydrogenase E1 component subunit alpha, mitochondrial</fullName>
        <shortName>PDHE1-A</shortName>
        <ecNumber>1.2.4.1</ecNumber>
    </recommendedName>
</protein>
<dbReference type="EC" id="1.2.4.1"/>
<dbReference type="EMBL" id="Z47812">
    <property type="protein sequence ID" value="CAA87793.1"/>
    <property type="molecule type" value="Genomic_DNA"/>
</dbReference>
<dbReference type="PIR" id="T24557">
    <property type="entry name" value="T24557"/>
</dbReference>
<dbReference type="RefSeq" id="NP_001379071.1">
    <property type="nucleotide sequence ID" value="NM_001393133.1"/>
</dbReference>
<dbReference type="RefSeq" id="NP_495693.1">
    <property type="nucleotide sequence ID" value="NM_063292.4"/>
</dbReference>
<dbReference type="SMR" id="P52899"/>
<dbReference type="BioGRID" id="533314">
    <property type="interactions" value="3"/>
</dbReference>
<dbReference type="DIP" id="DIP-24909N"/>
<dbReference type="FunCoup" id="P52899">
    <property type="interactions" value="1018"/>
</dbReference>
<dbReference type="IntAct" id="P52899">
    <property type="interactions" value="1"/>
</dbReference>
<dbReference type="STRING" id="6239.T05H10.6b.1"/>
<dbReference type="PaxDb" id="6239-T05H10.6b"/>
<dbReference type="PeptideAtlas" id="P52899"/>
<dbReference type="EnsemblMetazoa" id="T05H10.6a.1">
    <property type="protein sequence ID" value="T05H10.6a.1"/>
    <property type="gene ID" value="WBGene00011510"/>
</dbReference>
<dbReference type="EnsemblMetazoa" id="T05H10.6a.2">
    <property type="protein sequence ID" value="T05H10.6a.2"/>
    <property type="gene ID" value="WBGene00011510"/>
</dbReference>
<dbReference type="EnsemblMetazoa" id="T05H10.6a.3">
    <property type="protein sequence ID" value="T05H10.6a.3"/>
    <property type="gene ID" value="WBGene00011510"/>
</dbReference>
<dbReference type="GeneID" id="3565996"/>
<dbReference type="UCSC" id="T05H10.6b">
    <property type="organism name" value="c. elegans"/>
</dbReference>
<dbReference type="AGR" id="WB:WBGene00011510"/>
<dbReference type="WormBase" id="T05H10.6a">
    <property type="protein sequence ID" value="CE01643"/>
    <property type="gene ID" value="WBGene00011510"/>
    <property type="gene designation" value="pdha-1"/>
</dbReference>
<dbReference type="eggNOG" id="KOG0225">
    <property type="taxonomic scope" value="Eukaryota"/>
</dbReference>
<dbReference type="HOGENOM" id="CLU_029393_5_2_1"/>
<dbReference type="InParanoid" id="P52899"/>
<dbReference type="OrthoDB" id="10256198at2759"/>
<dbReference type="Reactome" id="R-CEL-204174">
    <property type="pathway name" value="Regulation of pyruvate dehydrogenase (PDH) complex"/>
</dbReference>
<dbReference type="Reactome" id="R-CEL-5362517">
    <property type="pathway name" value="Signaling by Retinoic Acid"/>
</dbReference>
<dbReference type="Reactome" id="R-CEL-9837999">
    <property type="pathway name" value="Mitochondrial protein degradation"/>
</dbReference>
<dbReference type="Reactome" id="R-CEL-9861559">
    <property type="pathway name" value="PDH complex synthesizes acetyl-CoA from PYR"/>
</dbReference>
<dbReference type="PRO" id="PR:P52899"/>
<dbReference type="Proteomes" id="UP000001940">
    <property type="component" value="Chromosome II"/>
</dbReference>
<dbReference type="Bgee" id="WBGene00011510">
    <property type="expression patterns" value="Expressed in germ line (C elegans) and 4 other cell types or tissues"/>
</dbReference>
<dbReference type="ExpressionAtlas" id="P52899">
    <property type="expression patterns" value="baseline and differential"/>
</dbReference>
<dbReference type="GO" id="GO:0005759">
    <property type="term" value="C:mitochondrial matrix"/>
    <property type="evidence" value="ECO:0007669"/>
    <property type="project" value="UniProtKB-SubCell"/>
</dbReference>
<dbReference type="GO" id="GO:0005739">
    <property type="term" value="C:mitochondrion"/>
    <property type="evidence" value="ECO:0007005"/>
    <property type="project" value="WormBase"/>
</dbReference>
<dbReference type="GO" id="GO:0046872">
    <property type="term" value="F:metal ion binding"/>
    <property type="evidence" value="ECO:0007669"/>
    <property type="project" value="UniProtKB-KW"/>
</dbReference>
<dbReference type="GO" id="GO:0004739">
    <property type="term" value="F:pyruvate dehydrogenase (acetyl-transferring) activity"/>
    <property type="evidence" value="ECO:0000318"/>
    <property type="project" value="GO_Central"/>
</dbReference>
<dbReference type="GO" id="GO:0006086">
    <property type="term" value="P:pyruvate decarboxylation to acetyl-CoA"/>
    <property type="evidence" value="ECO:0000318"/>
    <property type="project" value="GO_Central"/>
</dbReference>
<dbReference type="CDD" id="cd02000">
    <property type="entry name" value="TPP_E1_PDC_ADC_BCADC"/>
    <property type="match status" value="1"/>
</dbReference>
<dbReference type="FunFam" id="3.40.50.970:FF:000013">
    <property type="entry name" value="Pyruvate dehydrogenase E1 component subunit alpha"/>
    <property type="match status" value="1"/>
</dbReference>
<dbReference type="Gene3D" id="3.40.50.970">
    <property type="match status" value="1"/>
</dbReference>
<dbReference type="InterPro" id="IPR001017">
    <property type="entry name" value="DH_E1"/>
</dbReference>
<dbReference type="InterPro" id="IPR050642">
    <property type="entry name" value="PDH_E1_Alpha_Subunit"/>
</dbReference>
<dbReference type="InterPro" id="IPR017597">
    <property type="entry name" value="Pyrv_DH_E1_asu_subgrp-y"/>
</dbReference>
<dbReference type="InterPro" id="IPR029061">
    <property type="entry name" value="THDP-binding"/>
</dbReference>
<dbReference type="NCBIfam" id="TIGR03182">
    <property type="entry name" value="PDH_E1_alph_y"/>
    <property type="match status" value="1"/>
</dbReference>
<dbReference type="PANTHER" id="PTHR11516:SF60">
    <property type="entry name" value="PYRUVATE DEHYDROGENASE E1 COMPONENT SUBUNIT ALPHA"/>
    <property type="match status" value="1"/>
</dbReference>
<dbReference type="PANTHER" id="PTHR11516">
    <property type="entry name" value="PYRUVATE DEHYDROGENASE E1 COMPONENT, ALPHA SUBUNIT BACTERIAL AND ORGANELLAR"/>
    <property type="match status" value="1"/>
</dbReference>
<dbReference type="Pfam" id="PF00676">
    <property type="entry name" value="E1_dh"/>
    <property type="match status" value="1"/>
</dbReference>
<dbReference type="SUPFAM" id="SSF52518">
    <property type="entry name" value="Thiamin diphosphate-binding fold (THDP-binding)"/>
    <property type="match status" value="1"/>
</dbReference>